<evidence type="ECO:0000250" key="1"/>
<evidence type="ECO:0000255" key="2">
    <source>
        <dbReference type="PROSITE-ProRule" id="PRU00539"/>
    </source>
</evidence>
<evidence type="ECO:0000256" key="3">
    <source>
        <dbReference type="SAM" id="MobiDB-lite"/>
    </source>
</evidence>
<evidence type="ECO:0000305" key="4"/>
<feature type="chain" id="PRO_0000083276" description="RNA-directed RNA polymerase 2a">
    <location>
        <begin position="1"/>
        <end position="858"/>
    </location>
</feature>
<feature type="domain" description="RdRp catalytic" evidence="2">
    <location>
        <begin position="511"/>
        <end position="624"/>
    </location>
</feature>
<feature type="region of interest" description="Disordered" evidence="3">
    <location>
        <begin position="772"/>
        <end position="830"/>
    </location>
</feature>
<feature type="compositionally biased region" description="Basic and acidic residues" evidence="3">
    <location>
        <begin position="779"/>
        <end position="790"/>
    </location>
</feature>
<feature type="compositionally biased region" description="Polar residues" evidence="3">
    <location>
        <begin position="805"/>
        <end position="817"/>
    </location>
</feature>
<comment type="function">
    <text evidence="4">RNA-dependent RNA polymerase which replicates the viral genome composed of 3 RNA segments, RNA1, RNA2 and RNA3.</text>
</comment>
<comment type="catalytic activity">
    <reaction evidence="2">
        <text>RNA(n) + a ribonucleoside 5'-triphosphate = RNA(n+1) + diphosphate</text>
        <dbReference type="Rhea" id="RHEA:21248"/>
        <dbReference type="Rhea" id="RHEA-COMP:14527"/>
        <dbReference type="Rhea" id="RHEA-COMP:17342"/>
        <dbReference type="ChEBI" id="CHEBI:33019"/>
        <dbReference type="ChEBI" id="CHEBI:61557"/>
        <dbReference type="ChEBI" id="CHEBI:140395"/>
        <dbReference type="EC" id="2.7.7.48"/>
    </reaction>
</comment>
<comment type="subunit">
    <text evidence="1">Interacts with replication protein 1a.</text>
</comment>
<comment type="similarity">
    <text evidence="4">Belongs to the ssRNA positive-strand viruses RNA-directed RNA polymerase family.</text>
</comment>
<organismHost>
    <name type="scientific">Cucumis sativus</name>
    <name type="common">Cucumber</name>
    <dbReference type="NCBI Taxonomy" id="3659"/>
</organismHost>
<organismHost>
    <name type="scientific">Solanum lycopersicum</name>
    <name type="common">Tomato</name>
    <name type="synonym">Lycopersicon esculentum</name>
    <dbReference type="NCBI Taxonomy" id="4081"/>
</organismHost>
<organismHost>
    <name type="scientific">Spinacia oleracea</name>
    <name type="common">Spinach</name>
    <dbReference type="NCBI Taxonomy" id="3562"/>
</organismHost>
<accession>Q86783</accession>
<reference key="1">
    <citation type="journal article" date="1994" name="J. Gen. Virol.">
        <title>Nucleotide sequence and infectivity of cucumber mosaic cucumovirus (strain K) RNA2 involved in breakage of replicase-mediated resistance in tobacco.</title>
        <authorList>
            <person name="Hellwald K.H."/>
            <person name="Palukaitis P."/>
        </authorList>
    </citation>
    <scope>NUCLEOTIDE SEQUENCE [GENOMIC RNA]</scope>
</reference>
<sequence length="858" mass="96818">MAFPAPAFSLANLLNGSYGVDTPEEVERVRSEQREEAAAACRNYRPLPAVDVSESVPEDAHSLRTPDGAPSEEVSVEFVTYGAEDYLEKSDDELLVAFETMVKPMRIGQLWCPAFNKCSFISSIAMARALLLAPRTSHRTMKCFEDLVAAIYTKSDFYYDDECEADDVQIDISSRDVPGYSFEPWSRTSGFEPPPICEACDMIMYQCPCFDFNALKKSCAERTFADDYVIEGLDGVVDNATLLSNLGPFLVPVKCQYEKCPTPTVANPPSLNRATDRVDINLVQSICDSTLPTHSNYDDSFHQVFVESADYSIDLDHVRLRQSDLIAKIPDSGHMIPVLNTGSGHKRVGTTKEVLTAIKKRNADVPELGDSVNLSRLSKAVAERFFISYINGNSLASSNFVNVVSNFHDYMEKWKSSGLSYDDLPDLHAENLQFYDHMIKSDVKPVVSDTLNIDRPVPATITYHKKGITSQFSPLFTALFERFQRCLRERIILPVGKISSLEMAGFDVKNKHCLEIDLSKFDKSQGEFHLMIQEHILNGLGCPAPITKWWCDFHRFSYIRDRRAGVGMPISFQRRTGDAFTYFGNTIVTMAEFAWCYDTDQFEKLLFSGDDSLGFSVLPPVGDPSKFTTLFNMEAKVMEPAVPYICSKFLLSDEFGNTFSVPDPLREVQRLGTKKIPYSDNDEFLFAHFMSFVDRLKFLDRMTQSCIDQLSLFFELKYRKSGAEAALMLGAFKKYTANFQSYKELYYSDRRQCELINSFSCVELRIERSSSTKQRKKKDGIERRRDDKRRTPTGSYGGGEEAETKVSQAESTGTRSQKSQREGAFKSQAVPLPTILSSRWFGTDRDVPPCEHGGIVRV</sequence>
<proteinExistence type="inferred from homology"/>
<name>RDRP_CMVK</name>
<dbReference type="EC" id="2.7.7.48"/>
<dbReference type="EMBL" id="S72187">
    <property type="protein sequence ID" value="AAB31463.1"/>
    <property type="molecule type" value="Genomic_RNA"/>
</dbReference>
<dbReference type="GO" id="GO:0000166">
    <property type="term" value="F:nucleotide binding"/>
    <property type="evidence" value="ECO:0007669"/>
    <property type="project" value="UniProtKB-KW"/>
</dbReference>
<dbReference type="GO" id="GO:0003723">
    <property type="term" value="F:RNA binding"/>
    <property type="evidence" value="ECO:0007669"/>
    <property type="project" value="InterPro"/>
</dbReference>
<dbReference type="GO" id="GO:0003968">
    <property type="term" value="F:RNA-directed RNA polymerase activity"/>
    <property type="evidence" value="ECO:0007669"/>
    <property type="project" value="UniProtKB-KW"/>
</dbReference>
<dbReference type="GO" id="GO:0006351">
    <property type="term" value="P:DNA-templated transcription"/>
    <property type="evidence" value="ECO:0007669"/>
    <property type="project" value="InterPro"/>
</dbReference>
<dbReference type="GO" id="GO:0039690">
    <property type="term" value="P:positive stranded viral RNA replication"/>
    <property type="evidence" value="ECO:0007669"/>
    <property type="project" value="InterPro"/>
</dbReference>
<dbReference type="CDD" id="cd23252">
    <property type="entry name" value="Bromoviridae_RdRp"/>
    <property type="match status" value="1"/>
</dbReference>
<dbReference type="InterPro" id="IPR047309">
    <property type="entry name" value="Bromoviridae_RdRp"/>
</dbReference>
<dbReference type="InterPro" id="IPR043502">
    <property type="entry name" value="DNA/RNA_pol_sf"/>
</dbReference>
<dbReference type="InterPro" id="IPR001788">
    <property type="entry name" value="RNA-dep_RNA_pol_alsuvir"/>
</dbReference>
<dbReference type="InterPro" id="IPR007094">
    <property type="entry name" value="RNA-dir_pol_PSvirus"/>
</dbReference>
<dbReference type="Pfam" id="PF00978">
    <property type="entry name" value="RdRP_2"/>
    <property type="match status" value="1"/>
</dbReference>
<dbReference type="SUPFAM" id="SSF56672">
    <property type="entry name" value="DNA/RNA polymerases"/>
    <property type="match status" value="1"/>
</dbReference>
<dbReference type="PROSITE" id="PS50507">
    <property type="entry name" value="RDRP_SSRNA_POS"/>
    <property type="match status" value="1"/>
</dbReference>
<gene>
    <name type="ORF">ORF2a</name>
</gene>
<protein>
    <recommendedName>
        <fullName>RNA-directed RNA polymerase 2a</fullName>
        <shortName>protein 2a</shortName>
        <ecNumber>2.7.7.48</ecNumber>
    </recommendedName>
</protein>
<keyword id="KW-0547">Nucleotide-binding</keyword>
<keyword id="KW-0548">Nucleotidyltransferase</keyword>
<keyword id="KW-0696">RNA-directed RNA polymerase</keyword>
<keyword id="KW-0808">Transferase</keyword>
<keyword id="KW-0693">Viral RNA replication</keyword>
<organism>
    <name type="scientific">Cucumber mosaic virus (strain K)</name>
    <name type="common">CMV</name>
    <dbReference type="NCBI Taxonomy" id="117115"/>
    <lineage>
        <taxon>Viruses</taxon>
        <taxon>Riboviria</taxon>
        <taxon>Orthornavirae</taxon>
        <taxon>Kitrinoviricota</taxon>
        <taxon>Alsuviricetes</taxon>
        <taxon>Martellivirales</taxon>
        <taxon>Bromoviridae</taxon>
        <taxon>Cucumovirus</taxon>
        <taxon>Cucumber mosaic virus</taxon>
    </lineage>
</organism>